<comment type="subunit">
    <text evidence="1">Homodimer.</text>
</comment>
<comment type="subcellular location">
    <subcellularLocation>
        <location evidence="1">Cytoplasm</location>
    </subcellularLocation>
</comment>
<comment type="similarity">
    <text evidence="1">Belongs to the CutC family.</text>
</comment>
<comment type="caution">
    <text evidence="1">Once thought to be involved in copper homeostasis, experiments in E.coli have shown this is not the case.</text>
</comment>
<proteinExistence type="inferred from homology"/>
<sequence>MALLEICCYSMECALTAQQNGADRVELCAAPKEGGLTPSLGVLKSVRQRVTIPVHPIIRPRGGDFCYSDGEFAAILEDVRTVRELGFPGLVTGVLDVDGNVDMPRMEKIMAAAGPLAVTFHRAFDMCANPLNTLNNLAELGIARVLTSGQKSDALQGLSKIMELIAHRDAPIIMAGAGVRAENLHHFLDAGVLEVHSSAGAWQASPMRYRNQGLSMSSDAHADEYSRYVVDGAAVAEMKGIIERHQAK</sequence>
<organism>
    <name type="scientific">Escherichia coli (strain ATCC 8739 / DSM 1576 / NBRC 3972 / NCIMB 8545 / WDCM 00012 / Crooks)</name>
    <dbReference type="NCBI Taxonomy" id="481805"/>
    <lineage>
        <taxon>Bacteria</taxon>
        <taxon>Pseudomonadati</taxon>
        <taxon>Pseudomonadota</taxon>
        <taxon>Gammaproteobacteria</taxon>
        <taxon>Enterobacterales</taxon>
        <taxon>Enterobacteriaceae</taxon>
        <taxon>Escherichia</taxon>
    </lineage>
</organism>
<keyword id="KW-0963">Cytoplasm</keyword>
<evidence type="ECO:0000255" key="1">
    <source>
        <dbReference type="HAMAP-Rule" id="MF_00795"/>
    </source>
</evidence>
<gene>
    <name evidence="1" type="primary">cutC</name>
    <name type="ordered locus">EcolC_1758</name>
</gene>
<dbReference type="EMBL" id="CP000946">
    <property type="protein sequence ID" value="ACA77408.1"/>
    <property type="molecule type" value="Genomic_DNA"/>
</dbReference>
<dbReference type="RefSeq" id="WP_001185727.1">
    <property type="nucleotide sequence ID" value="NZ_MTFT01000011.1"/>
</dbReference>
<dbReference type="SMR" id="B1J0L4"/>
<dbReference type="KEGG" id="ecl:EcolC_1758"/>
<dbReference type="HOGENOM" id="CLU_050555_3_1_6"/>
<dbReference type="GO" id="GO:0005737">
    <property type="term" value="C:cytoplasm"/>
    <property type="evidence" value="ECO:0007669"/>
    <property type="project" value="UniProtKB-SubCell"/>
</dbReference>
<dbReference type="GO" id="GO:0005507">
    <property type="term" value="F:copper ion binding"/>
    <property type="evidence" value="ECO:0007669"/>
    <property type="project" value="TreeGrafter"/>
</dbReference>
<dbReference type="FunFam" id="3.20.20.380:FF:000001">
    <property type="entry name" value="Copper homeostasis protein CutC"/>
    <property type="match status" value="1"/>
</dbReference>
<dbReference type="Gene3D" id="3.20.20.380">
    <property type="entry name" value="Copper homeostasis (CutC) domain"/>
    <property type="match status" value="1"/>
</dbReference>
<dbReference type="HAMAP" id="MF_00795">
    <property type="entry name" value="CutC"/>
    <property type="match status" value="1"/>
</dbReference>
<dbReference type="InterPro" id="IPR005627">
    <property type="entry name" value="CutC-like"/>
</dbReference>
<dbReference type="InterPro" id="IPR036822">
    <property type="entry name" value="CutC-like_dom_sf"/>
</dbReference>
<dbReference type="NCBIfam" id="NF008603">
    <property type="entry name" value="PRK11572.1"/>
    <property type="match status" value="1"/>
</dbReference>
<dbReference type="PANTHER" id="PTHR12598">
    <property type="entry name" value="COPPER HOMEOSTASIS PROTEIN CUTC"/>
    <property type="match status" value="1"/>
</dbReference>
<dbReference type="PANTHER" id="PTHR12598:SF0">
    <property type="entry name" value="COPPER HOMEOSTASIS PROTEIN CUTC HOMOLOG"/>
    <property type="match status" value="1"/>
</dbReference>
<dbReference type="Pfam" id="PF03932">
    <property type="entry name" value="CutC"/>
    <property type="match status" value="1"/>
</dbReference>
<dbReference type="SUPFAM" id="SSF110395">
    <property type="entry name" value="CutC-like"/>
    <property type="match status" value="1"/>
</dbReference>
<feature type="chain" id="PRO_1000083678" description="PF03932 family protein CutC">
    <location>
        <begin position="1"/>
        <end position="248"/>
    </location>
</feature>
<accession>B1J0L4</accession>
<protein>
    <recommendedName>
        <fullName evidence="1">PF03932 family protein CutC</fullName>
    </recommendedName>
</protein>
<reference key="1">
    <citation type="submission" date="2008-02" db="EMBL/GenBank/DDBJ databases">
        <title>Complete sequence of Escherichia coli C str. ATCC 8739.</title>
        <authorList>
            <person name="Copeland A."/>
            <person name="Lucas S."/>
            <person name="Lapidus A."/>
            <person name="Glavina del Rio T."/>
            <person name="Dalin E."/>
            <person name="Tice H."/>
            <person name="Bruce D."/>
            <person name="Goodwin L."/>
            <person name="Pitluck S."/>
            <person name="Kiss H."/>
            <person name="Brettin T."/>
            <person name="Detter J.C."/>
            <person name="Han C."/>
            <person name="Kuske C.R."/>
            <person name="Schmutz J."/>
            <person name="Larimer F."/>
            <person name="Land M."/>
            <person name="Hauser L."/>
            <person name="Kyrpides N."/>
            <person name="Mikhailova N."/>
            <person name="Ingram L."/>
            <person name="Richardson P."/>
        </authorList>
    </citation>
    <scope>NUCLEOTIDE SEQUENCE [LARGE SCALE GENOMIC DNA]</scope>
    <source>
        <strain>ATCC 8739 / DSM 1576 / NBRC 3972 / NCIMB 8545 / WDCM 00012 / Crooks</strain>
    </source>
</reference>
<name>CUTC_ECOLC</name>